<feature type="chain" id="PRO_0000237148" description="Large ribosomal subunit protein uL2">
    <location>
        <begin position="1"/>
        <end position="275"/>
    </location>
</feature>
<feature type="region of interest" description="Disordered" evidence="2">
    <location>
        <begin position="36"/>
        <end position="55"/>
    </location>
</feature>
<feature type="region of interest" description="Disordered" evidence="2">
    <location>
        <begin position="223"/>
        <end position="275"/>
    </location>
</feature>
<feature type="compositionally biased region" description="Polar residues" evidence="2">
    <location>
        <begin position="39"/>
        <end position="48"/>
    </location>
</feature>
<feature type="compositionally biased region" description="Basic and acidic residues" evidence="2">
    <location>
        <begin position="229"/>
        <end position="239"/>
    </location>
</feature>
<protein>
    <recommendedName>
        <fullName evidence="1">Large ribosomal subunit protein uL2</fullName>
    </recommendedName>
    <alternativeName>
        <fullName evidence="3">50S ribosomal protein L2</fullName>
    </alternativeName>
</protein>
<gene>
    <name evidence="1" type="primary">rplB</name>
    <name type="ordered locus">AZOSEA21600</name>
    <name type="ORF">ebA3831</name>
</gene>
<keyword id="KW-1185">Reference proteome</keyword>
<keyword id="KW-0687">Ribonucleoprotein</keyword>
<keyword id="KW-0689">Ribosomal protein</keyword>
<keyword id="KW-0694">RNA-binding</keyword>
<keyword id="KW-0699">rRNA-binding</keyword>
<evidence type="ECO:0000255" key="1">
    <source>
        <dbReference type="HAMAP-Rule" id="MF_01320"/>
    </source>
</evidence>
<evidence type="ECO:0000256" key="2">
    <source>
        <dbReference type="SAM" id="MobiDB-lite"/>
    </source>
</evidence>
<evidence type="ECO:0000305" key="3"/>
<dbReference type="EMBL" id="CR555306">
    <property type="protein sequence ID" value="CAI08285.1"/>
    <property type="molecule type" value="Genomic_DNA"/>
</dbReference>
<dbReference type="RefSeq" id="WP_011237975.1">
    <property type="nucleotide sequence ID" value="NC_006513.1"/>
</dbReference>
<dbReference type="SMR" id="Q5P329"/>
<dbReference type="STRING" id="76114.ebA3831"/>
<dbReference type="KEGG" id="eba:ebA3831"/>
<dbReference type="eggNOG" id="COG0090">
    <property type="taxonomic scope" value="Bacteria"/>
</dbReference>
<dbReference type="HOGENOM" id="CLU_036235_2_1_4"/>
<dbReference type="OrthoDB" id="9778722at2"/>
<dbReference type="Proteomes" id="UP000006552">
    <property type="component" value="Chromosome"/>
</dbReference>
<dbReference type="GO" id="GO:0015934">
    <property type="term" value="C:large ribosomal subunit"/>
    <property type="evidence" value="ECO:0007669"/>
    <property type="project" value="InterPro"/>
</dbReference>
<dbReference type="GO" id="GO:0019843">
    <property type="term" value="F:rRNA binding"/>
    <property type="evidence" value="ECO:0007669"/>
    <property type="project" value="UniProtKB-UniRule"/>
</dbReference>
<dbReference type="GO" id="GO:0003735">
    <property type="term" value="F:structural constituent of ribosome"/>
    <property type="evidence" value="ECO:0007669"/>
    <property type="project" value="InterPro"/>
</dbReference>
<dbReference type="GO" id="GO:0016740">
    <property type="term" value="F:transferase activity"/>
    <property type="evidence" value="ECO:0007669"/>
    <property type="project" value="InterPro"/>
</dbReference>
<dbReference type="GO" id="GO:0002181">
    <property type="term" value="P:cytoplasmic translation"/>
    <property type="evidence" value="ECO:0007669"/>
    <property type="project" value="TreeGrafter"/>
</dbReference>
<dbReference type="FunFam" id="2.30.30.30:FF:000001">
    <property type="entry name" value="50S ribosomal protein L2"/>
    <property type="match status" value="1"/>
</dbReference>
<dbReference type="FunFam" id="2.40.50.140:FF:000003">
    <property type="entry name" value="50S ribosomal protein L2"/>
    <property type="match status" value="1"/>
</dbReference>
<dbReference type="FunFam" id="4.10.950.10:FF:000001">
    <property type="entry name" value="50S ribosomal protein L2"/>
    <property type="match status" value="1"/>
</dbReference>
<dbReference type="Gene3D" id="2.30.30.30">
    <property type="match status" value="1"/>
</dbReference>
<dbReference type="Gene3D" id="2.40.50.140">
    <property type="entry name" value="Nucleic acid-binding proteins"/>
    <property type="match status" value="1"/>
</dbReference>
<dbReference type="Gene3D" id="4.10.950.10">
    <property type="entry name" value="Ribosomal protein L2, domain 3"/>
    <property type="match status" value="1"/>
</dbReference>
<dbReference type="HAMAP" id="MF_01320_B">
    <property type="entry name" value="Ribosomal_uL2_B"/>
    <property type="match status" value="1"/>
</dbReference>
<dbReference type="InterPro" id="IPR012340">
    <property type="entry name" value="NA-bd_OB-fold"/>
</dbReference>
<dbReference type="InterPro" id="IPR014722">
    <property type="entry name" value="Rib_uL2_dom2"/>
</dbReference>
<dbReference type="InterPro" id="IPR002171">
    <property type="entry name" value="Ribosomal_uL2"/>
</dbReference>
<dbReference type="InterPro" id="IPR005880">
    <property type="entry name" value="Ribosomal_uL2_bac/org-type"/>
</dbReference>
<dbReference type="InterPro" id="IPR022669">
    <property type="entry name" value="Ribosomal_uL2_C"/>
</dbReference>
<dbReference type="InterPro" id="IPR022671">
    <property type="entry name" value="Ribosomal_uL2_CS"/>
</dbReference>
<dbReference type="InterPro" id="IPR014726">
    <property type="entry name" value="Ribosomal_uL2_dom3"/>
</dbReference>
<dbReference type="InterPro" id="IPR022666">
    <property type="entry name" value="Ribosomal_uL2_RNA-bd_dom"/>
</dbReference>
<dbReference type="InterPro" id="IPR008991">
    <property type="entry name" value="Translation_prot_SH3-like_sf"/>
</dbReference>
<dbReference type="NCBIfam" id="TIGR01171">
    <property type="entry name" value="rplB_bact"/>
    <property type="match status" value="1"/>
</dbReference>
<dbReference type="PANTHER" id="PTHR13691:SF5">
    <property type="entry name" value="LARGE RIBOSOMAL SUBUNIT PROTEIN UL2M"/>
    <property type="match status" value="1"/>
</dbReference>
<dbReference type="PANTHER" id="PTHR13691">
    <property type="entry name" value="RIBOSOMAL PROTEIN L2"/>
    <property type="match status" value="1"/>
</dbReference>
<dbReference type="Pfam" id="PF00181">
    <property type="entry name" value="Ribosomal_L2"/>
    <property type="match status" value="1"/>
</dbReference>
<dbReference type="Pfam" id="PF03947">
    <property type="entry name" value="Ribosomal_L2_C"/>
    <property type="match status" value="1"/>
</dbReference>
<dbReference type="PIRSF" id="PIRSF002158">
    <property type="entry name" value="Ribosomal_L2"/>
    <property type="match status" value="1"/>
</dbReference>
<dbReference type="SMART" id="SM01383">
    <property type="entry name" value="Ribosomal_L2"/>
    <property type="match status" value="1"/>
</dbReference>
<dbReference type="SMART" id="SM01382">
    <property type="entry name" value="Ribosomal_L2_C"/>
    <property type="match status" value="1"/>
</dbReference>
<dbReference type="SUPFAM" id="SSF50249">
    <property type="entry name" value="Nucleic acid-binding proteins"/>
    <property type="match status" value="1"/>
</dbReference>
<dbReference type="SUPFAM" id="SSF50104">
    <property type="entry name" value="Translation proteins SH3-like domain"/>
    <property type="match status" value="1"/>
</dbReference>
<dbReference type="PROSITE" id="PS00467">
    <property type="entry name" value="RIBOSOMAL_L2"/>
    <property type="match status" value="1"/>
</dbReference>
<sequence length="275" mass="29871">MALVKLKPTSAGRRAMVKVVNADLYKGRPHAALVEKQSKNAGRNNSGRITVRHQGGGHKQHYRLVDFRRNKDGIAARVERVEYDPNRSANIALICYADGERAYIIAPKGLEVGQTVLSGPEAPIKAGNVLPIRNIPVGSTIHCVELMPGKGAQIARAAGTSVQLLAREGAYAQLRLRSGEVRRVHVECRAAIGVVGNEEHGLRKIGKAGANRWRGIRPTVRGVAMNPVDHPHGGGEGRTGEGGVARSPWGQPAKGYRTRSNKRTDTMIVQRRHKR</sequence>
<name>RL2_AROAE</name>
<accession>Q5P329</accession>
<proteinExistence type="inferred from homology"/>
<comment type="function">
    <text evidence="1">One of the primary rRNA binding proteins. Required for association of the 30S and 50S subunits to form the 70S ribosome, for tRNA binding and peptide bond formation. It has been suggested to have peptidyltransferase activity; this is somewhat controversial. Makes several contacts with the 16S rRNA in the 70S ribosome.</text>
</comment>
<comment type="subunit">
    <text evidence="1">Part of the 50S ribosomal subunit. Forms a bridge to the 30S subunit in the 70S ribosome.</text>
</comment>
<comment type="similarity">
    <text evidence="1">Belongs to the universal ribosomal protein uL2 family.</text>
</comment>
<organism>
    <name type="scientific">Aromatoleum aromaticum (strain DSM 19018 / LMG 30748 / EbN1)</name>
    <name type="common">Azoarcus sp. (strain EbN1)</name>
    <dbReference type="NCBI Taxonomy" id="76114"/>
    <lineage>
        <taxon>Bacteria</taxon>
        <taxon>Pseudomonadati</taxon>
        <taxon>Pseudomonadota</taxon>
        <taxon>Betaproteobacteria</taxon>
        <taxon>Rhodocyclales</taxon>
        <taxon>Rhodocyclaceae</taxon>
        <taxon>Aromatoleum</taxon>
    </lineage>
</organism>
<reference key="1">
    <citation type="journal article" date="2005" name="Arch. Microbiol.">
        <title>The genome sequence of an anaerobic aromatic-degrading denitrifying bacterium, strain EbN1.</title>
        <authorList>
            <person name="Rabus R."/>
            <person name="Kube M."/>
            <person name="Heider J."/>
            <person name="Beck A."/>
            <person name="Heitmann K."/>
            <person name="Widdel F."/>
            <person name="Reinhardt R."/>
        </authorList>
    </citation>
    <scope>NUCLEOTIDE SEQUENCE [LARGE SCALE GENOMIC DNA]</scope>
    <source>
        <strain>DSM 19018 / LMG 30748 / EbN1</strain>
    </source>
</reference>